<gene>
    <name type="primary">SYM1</name>
    <name type="ordered locus">CAALFM_C206430CA</name>
    <name type="ORF">CaO19.21</name>
    <name type="ORF">CaO19.7692</name>
</gene>
<comment type="function">
    <text evidence="1">May be involved in cellular response to stress. Required to maintain mitochondrial DNA (mtDNA) integrity and stability (By similarity).</text>
</comment>
<comment type="subcellular location">
    <subcellularLocation>
        <location evidence="1">Mitochondrion inner membrane</location>
        <topology evidence="1">Multi-pass membrane protein</topology>
    </subcellularLocation>
</comment>
<comment type="similarity">
    <text evidence="3">Belongs to the peroxisomal membrane protein PXMP2/4 family.</text>
</comment>
<evidence type="ECO:0000250" key="1"/>
<evidence type="ECO:0000255" key="2"/>
<evidence type="ECO:0000305" key="3"/>
<name>SYM1_CANAL</name>
<reference key="1">
    <citation type="journal article" date="2004" name="Proc. Natl. Acad. Sci. U.S.A.">
        <title>The diploid genome sequence of Candida albicans.</title>
        <authorList>
            <person name="Jones T."/>
            <person name="Federspiel N.A."/>
            <person name="Chibana H."/>
            <person name="Dungan J."/>
            <person name="Kalman S."/>
            <person name="Magee B.B."/>
            <person name="Newport G."/>
            <person name="Thorstenson Y.R."/>
            <person name="Agabian N."/>
            <person name="Magee P.T."/>
            <person name="Davis R.W."/>
            <person name="Scherer S."/>
        </authorList>
    </citation>
    <scope>NUCLEOTIDE SEQUENCE [LARGE SCALE GENOMIC DNA]</scope>
    <source>
        <strain>SC5314 / ATCC MYA-2876</strain>
    </source>
</reference>
<reference key="2">
    <citation type="journal article" date="2007" name="Genome Biol.">
        <title>Assembly of the Candida albicans genome into sixteen supercontigs aligned on the eight chromosomes.</title>
        <authorList>
            <person name="van het Hoog M."/>
            <person name="Rast T.J."/>
            <person name="Martchenko M."/>
            <person name="Grindle S."/>
            <person name="Dignard D."/>
            <person name="Hogues H."/>
            <person name="Cuomo C."/>
            <person name="Berriman M."/>
            <person name="Scherer S."/>
            <person name="Magee B.B."/>
            <person name="Whiteway M."/>
            <person name="Chibana H."/>
            <person name="Nantel A."/>
            <person name="Magee P.T."/>
        </authorList>
    </citation>
    <scope>GENOME REANNOTATION</scope>
    <source>
        <strain>SC5314 / ATCC MYA-2876</strain>
    </source>
</reference>
<reference key="3">
    <citation type="journal article" date="2013" name="Genome Biol.">
        <title>Assembly of a phased diploid Candida albicans genome facilitates allele-specific measurements and provides a simple model for repeat and indel structure.</title>
        <authorList>
            <person name="Muzzey D."/>
            <person name="Schwartz K."/>
            <person name="Weissman J.S."/>
            <person name="Sherlock G."/>
        </authorList>
    </citation>
    <scope>NUCLEOTIDE SEQUENCE [LARGE SCALE GENOMIC DNA]</scope>
    <scope>GENOME REANNOTATION</scope>
    <source>
        <strain>SC5314 / ATCC MYA-2876</strain>
    </source>
</reference>
<feature type="chain" id="PRO_0000234408" description="Protein SYM1">
    <location>
        <begin position="1"/>
        <end position="195"/>
    </location>
</feature>
<feature type="transmembrane region" description="Helical" evidence="2">
    <location>
        <begin position="17"/>
        <end position="39"/>
    </location>
</feature>
<feature type="transmembrane region" description="Helical" evidence="2">
    <location>
        <begin position="59"/>
        <end position="78"/>
    </location>
</feature>
<feature type="transmembrane region" description="Helical" evidence="2">
    <location>
        <begin position="99"/>
        <end position="121"/>
    </location>
</feature>
<feature type="transmembrane region" description="Helical" evidence="2">
    <location>
        <begin position="168"/>
        <end position="190"/>
    </location>
</feature>
<keyword id="KW-0472">Membrane</keyword>
<keyword id="KW-0496">Mitochondrion</keyword>
<keyword id="KW-0999">Mitochondrion inner membrane</keyword>
<keyword id="KW-1185">Reference proteome</keyword>
<keyword id="KW-0812">Transmembrane</keyword>
<keyword id="KW-1133">Transmembrane helix</keyword>
<accession>Q59Q43</accession>
<accession>A0A1D8PHM0</accession>
<dbReference type="EMBL" id="CP017624">
    <property type="protein sequence ID" value="AOW27648.1"/>
    <property type="molecule type" value="Genomic_DNA"/>
</dbReference>
<dbReference type="RefSeq" id="XP_711828.1">
    <property type="nucleotide sequence ID" value="XM_706736.1"/>
</dbReference>
<dbReference type="FunCoup" id="Q59Q43">
    <property type="interactions" value="621"/>
</dbReference>
<dbReference type="STRING" id="237561.Q59Q43"/>
<dbReference type="EnsemblFungi" id="C2_06430C_A-T">
    <property type="protein sequence ID" value="C2_06430C_A-T-p1"/>
    <property type="gene ID" value="C2_06430C_A"/>
</dbReference>
<dbReference type="GeneID" id="3646558"/>
<dbReference type="KEGG" id="cal:CAALFM_C206430CA"/>
<dbReference type="CGD" id="CAL0000199251">
    <property type="gene designation" value="orf19.7692"/>
</dbReference>
<dbReference type="VEuPathDB" id="FungiDB:C2_06430C_A"/>
<dbReference type="eggNOG" id="KOG1944">
    <property type="taxonomic scope" value="Eukaryota"/>
</dbReference>
<dbReference type="HOGENOM" id="CLU_049109_8_1_1"/>
<dbReference type="InParanoid" id="Q59Q43"/>
<dbReference type="OMA" id="CAPTMIG"/>
<dbReference type="OrthoDB" id="430207at2759"/>
<dbReference type="PRO" id="PR:Q59Q43"/>
<dbReference type="Proteomes" id="UP000000559">
    <property type="component" value="Chromosome 2"/>
</dbReference>
<dbReference type="GO" id="GO:0005737">
    <property type="term" value="C:cytoplasm"/>
    <property type="evidence" value="ECO:0000318"/>
    <property type="project" value="GO_Central"/>
</dbReference>
<dbReference type="GO" id="GO:0005743">
    <property type="term" value="C:mitochondrial inner membrane"/>
    <property type="evidence" value="ECO:0007669"/>
    <property type="project" value="UniProtKB-SubCell"/>
</dbReference>
<dbReference type="GO" id="GO:0005739">
    <property type="term" value="C:mitochondrion"/>
    <property type="evidence" value="ECO:0000318"/>
    <property type="project" value="GO_Central"/>
</dbReference>
<dbReference type="InterPro" id="IPR007248">
    <property type="entry name" value="Mpv17_PMP22"/>
</dbReference>
<dbReference type="PANTHER" id="PTHR11266">
    <property type="entry name" value="PEROXISOMAL MEMBRANE PROTEIN 2, PXMP2 MPV17"/>
    <property type="match status" value="1"/>
</dbReference>
<dbReference type="PANTHER" id="PTHR11266:SF17">
    <property type="entry name" value="PROTEIN MPV17"/>
    <property type="match status" value="1"/>
</dbReference>
<dbReference type="Pfam" id="PF04117">
    <property type="entry name" value="Mpv17_PMP22"/>
    <property type="match status" value="1"/>
</dbReference>
<protein>
    <recommendedName>
        <fullName>Protein SYM1</fullName>
    </recommendedName>
</protein>
<organism>
    <name type="scientific">Candida albicans (strain SC5314 / ATCC MYA-2876)</name>
    <name type="common">Yeast</name>
    <dbReference type="NCBI Taxonomy" id="237561"/>
    <lineage>
        <taxon>Eukaryota</taxon>
        <taxon>Fungi</taxon>
        <taxon>Dikarya</taxon>
        <taxon>Ascomycota</taxon>
        <taxon>Saccharomycotina</taxon>
        <taxon>Pichiomycetes</taxon>
        <taxon>Debaryomycetaceae</taxon>
        <taxon>Candida/Lodderomyces clade</taxon>
        <taxon>Candida</taxon>
    </lineage>
</organism>
<sequence>MKYIFNRYNALLLRRPLITNMITTGLLVGGGDALAQFFFPNNDNNNLEQQPFDYLRNLRAIIYGSLIFAPIGDKWYKFLNTKVVWTRNAQKPQYQRSMSTLLRVMVDQLVFAPFIGIPLYYSSMTILENRQPFLDNIIDKFNTSWWITLKSNWLVWPLFQFFNFYLLPVQFRLLAVNIISIGWNTYLSYVMHSQK</sequence>
<proteinExistence type="inferred from homology"/>